<proteinExistence type="inferred from homology"/>
<feature type="chain" id="PRO_0000129393" description="Large ribosomal subunit protein uL23">
    <location>
        <begin position="1"/>
        <end position="100"/>
    </location>
</feature>
<name>RL23_AGGAC</name>
<gene>
    <name evidence="1" type="primary">rplW</name>
</gene>
<keyword id="KW-0687">Ribonucleoprotein</keyword>
<keyword id="KW-0689">Ribosomal protein</keyword>
<keyword id="KW-0694">RNA-binding</keyword>
<keyword id="KW-0699">rRNA-binding</keyword>
<evidence type="ECO:0000255" key="1">
    <source>
        <dbReference type="HAMAP-Rule" id="MF_01369"/>
    </source>
</evidence>
<evidence type="ECO:0000305" key="2"/>
<organism>
    <name type="scientific">Aggregatibacter actinomycetemcomitans</name>
    <name type="common">Actinobacillus actinomycetemcomitans</name>
    <name type="synonym">Haemophilus actinomycetemcomitans</name>
    <dbReference type="NCBI Taxonomy" id="714"/>
    <lineage>
        <taxon>Bacteria</taxon>
        <taxon>Pseudomonadati</taxon>
        <taxon>Pseudomonadota</taxon>
        <taxon>Gammaproteobacteria</taxon>
        <taxon>Pasteurellales</taxon>
        <taxon>Pasteurellaceae</taxon>
        <taxon>Aggregatibacter</taxon>
    </lineage>
</organism>
<comment type="function">
    <text evidence="1">One of the early assembly proteins it binds 23S rRNA. One of the proteins that surrounds the polypeptide exit tunnel on the outside of the ribosome. Forms the main docking site for trigger factor binding to the ribosome.</text>
</comment>
<comment type="subunit">
    <text evidence="1">Part of the 50S ribosomal subunit. Contacts protein L29, and trigger factor when it is bound to the ribosome.</text>
</comment>
<comment type="similarity">
    <text evidence="1">Belongs to the universal ribosomal protein uL23 family.</text>
</comment>
<accession>P55839</accession>
<reference key="1">
    <citation type="journal article" date="1996" name="Microbiology">
        <title>Molecular analysis of a new insertion sequence from Actinobacillus (Haemophilus) actinomycetemcomitans FDC Y4.</title>
        <authorList>
            <person name="Hayashida H."/>
            <person name="Hotokezaka H."/>
            <person name="Ohara N."/>
            <person name="Kimura M."/>
            <person name="Takagi O."/>
            <person name="Yamada T."/>
        </authorList>
    </citation>
    <scope>NUCLEOTIDE SEQUENCE [GENOMIC DNA]</scope>
    <source>
        <strain>ATCC 43718 / FDC Y4 / Serotype b</strain>
    </source>
</reference>
<reference key="2">
    <citation type="submission" date="1997-08" db="EMBL/GenBank/DDBJ databases">
        <authorList>
            <person name="Hayashida H."/>
            <person name="Hotokezaka H."/>
            <person name="Ohara N."/>
            <person name="Takagi O."/>
            <person name="Yamada T."/>
        </authorList>
    </citation>
    <scope>NUCLEOTIDE SEQUENCE [GENOMIC DNA]</scope>
    <source>
        <strain>ATCC 43718 / FDC Y4 / Serotype b</strain>
    </source>
</reference>
<sequence length="100" mass="11142">MSQERLLKVLKAPHISEKATNNAEKSNTIVFKVALDANKVEITNAVEQLFEVKVDSVRTVVVKGKTKRRGAKIGRRSDWKKAYVTLQEGQSLDFVEGAAE</sequence>
<dbReference type="EMBL" id="D64071">
    <property type="protein sequence ID" value="BAA10949.1"/>
    <property type="molecule type" value="Genomic_DNA"/>
</dbReference>
<dbReference type="EMBL" id="D21244">
    <property type="protein sequence ID" value="BAA21823.1"/>
    <property type="molecule type" value="Genomic_DNA"/>
</dbReference>
<dbReference type="RefSeq" id="WP_005545486.1">
    <property type="nucleotide sequence ID" value="NZ_VSEW01000015.1"/>
</dbReference>
<dbReference type="SMR" id="P55839"/>
<dbReference type="STRING" id="714.ACT75_03750"/>
<dbReference type="GeneID" id="77210694"/>
<dbReference type="eggNOG" id="COG0089">
    <property type="taxonomic scope" value="Bacteria"/>
</dbReference>
<dbReference type="GO" id="GO:1990904">
    <property type="term" value="C:ribonucleoprotein complex"/>
    <property type="evidence" value="ECO:0007669"/>
    <property type="project" value="UniProtKB-KW"/>
</dbReference>
<dbReference type="GO" id="GO:0005840">
    <property type="term" value="C:ribosome"/>
    <property type="evidence" value="ECO:0007669"/>
    <property type="project" value="UniProtKB-KW"/>
</dbReference>
<dbReference type="GO" id="GO:0019843">
    <property type="term" value="F:rRNA binding"/>
    <property type="evidence" value="ECO:0007669"/>
    <property type="project" value="UniProtKB-UniRule"/>
</dbReference>
<dbReference type="GO" id="GO:0003735">
    <property type="term" value="F:structural constituent of ribosome"/>
    <property type="evidence" value="ECO:0007669"/>
    <property type="project" value="InterPro"/>
</dbReference>
<dbReference type="GO" id="GO:0006412">
    <property type="term" value="P:translation"/>
    <property type="evidence" value="ECO:0007669"/>
    <property type="project" value="UniProtKB-UniRule"/>
</dbReference>
<dbReference type="FunFam" id="3.30.70.330:FF:000001">
    <property type="entry name" value="50S ribosomal protein L23"/>
    <property type="match status" value="1"/>
</dbReference>
<dbReference type="Gene3D" id="3.30.70.330">
    <property type="match status" value="1"/>
</dbReference>
<dbReference type="HAMAP" id="MF_01369_B">
    <property type="entry name" value="Ribosomal_uL23_B"/>
    <property type="match status" value="1"/>
</dbReference>
<dbReference type="InterPro" id="IPR012677">
    <property type="entry name" value="Nucleotide-bd_a/b_plait_sf"/>
</dbReference>
<dbReference type="InterPro" id="IPR013025">
    <property type="entry name" value="Ribosomal_uL23-like"/>
</dbReference>
<dbReference type="InterPro" id="IPR012678">
    <property type="entry name" value="Ribosomal_uL23/eL15/eS24_sf"/>
</dbReference>
<dbReference type="InterPro" id="IPR001014">
    <property type="entry name" value="Ribosomal_uL23_CS"/>
</dbReference>
<dbReference type="NCBIfam" id="NF004358">
    <property type="entry name" value="PRK05738.1-1"/>
    <property type="match status" value="1"/>
</dbReference>
<dbReference type="NCBIfam" id="NF004359">
    <property type="entry name" value="PRK05738.1-3"/>
    <property type="match status" value="1"/>
</dbReference>
<dbReference type="NCBIfam" id="NF004363">
    <property type="entry name" value="PRK05738.2-4"/>
    <property type="match status" value="1"/>
</dbReference>
<dbReference type="NCBIfam" id="NF004366">
    <property type="entry name" value="PRK05738.3-2"/>
    <property type="match status" value="1"/>
</dbReference>
<dbReference type="PANTHER" id="PTHR11620">
    <property type="entry name" value="60S RIBOSOMAL PROTEIN L23A"/>
    <property type="match status" value="1"/>
</dbReference>
<dbReference type="Pfam" id="PF00276">
    <property type="entry name" value="Ribosomal_L23"/>
    <property type="match status" value="1"/>
</dbReference>
<dbReference type="SUPFAM" id="SSF54189">
    <property type="entry name" value="Ribosomal proteins S24e, L23 and L15e"/>
    <property type="match status" value="1"/>
</dbReference>
<dbReference type="PROSITE" id="PS00050">
    <property type="entry name" value="RIBOSOMAL_L23"/>
    <property type="match status" value="1"/>
</dbReference>
<protein>
    <recommendedName>
        <fullName evidence="1">Large ribosomal subunit protein uL23</fullName>
    </recommendedName>
    <alternativeName>
        <fullName evidence="2">50S ribosomal protein L23</fullName>
    </alternativeName>
</protein>